<accession>Q8S905</accession>
<accession>Q9LPQ5</accession>
<sequence>MTIKTPGTPVSKMDRTPAVTPGGSSRSREEKIVVTVRLRPMNKRELLAKDQVAWECVNDHTIVSKPQVQERLHHQSSFTFDKVFGPESLTENVYEDGVKNVALSALMGINATIFAYGQTSSGKTYTMRGVTEKAVNDIYNHIIKTPERDFTIKISGLEIYNENVRDLLNSDSGRALKLLDDPEKGTVVEKLVEETANNDNHLRHLISICEAQRQVGETALNDTSSRSHQIIRLTIQSTHRENSDCVRSYMASLNFVDLAGSERASQSQADGTRLREGCHINLSLMTLTTVIRKLSVGKRSGHIPYRDSKLTRILQHSLGGNARTAIICTLSPALAHVEQSRNTLYFANRAKEVTNNAHVNMVVSDKQLVKHLQKEVARLEAERRTPGPSTEKDFKIQQMEMEIGELRRQRDDAQIQLEELRQKLQGDQQQNKGLNPFESPDPPVRKCLSYSVAVTPSSENKTLNRNERARKTTMRQSMIRQSSTAPFTLMHEIRKLEHLQEQLGEEATKALEVLQKEVACHRLGNQDAAQTIAKLQAEIREMRTVKPSAMLKEVGDVIAPNKSVSANLKEEITRLHSQGSTIANLEEQLESVQKSIDKLVMSLPSNISAGDETPKTKNHHHQSKKKKLLPLTPSSASNRQNFLKSPCSPLSASRQVLDCDAENKAPQENNSSAARGATTPQGSEKETPQKGEESGDVSSREGTPGYRRSSSVNMKKMQQMFQNAAEENVRSIRAYVTELKERVAKLQYQKQLLVCQVLELEANDGAGYSVENEENTIMEDEEQNQVAWHITFIEERQQIIELWHVCHVSIIHRTQFYLLFKGDQADQIYMEVELRRLTWLEQHLAEVGNATPARNCDESVVSLSSSIKALRREREFLAKRVNSRLTPEEREELYMKWDVPLEGKQRKLQFVNKLWTDPYDSRHVQESAEIVAKLVGFCESGNISKEMFELNFAVPSDKRQWNIGWDNISNLLHL</sequence>
<gene>
    <name evidence="17" type="primary">KIN7A</name>
    <name evidence="13" type="synonym">HIK</name>
    <name evidence="20" type="synonym">NACK1</name>
    <name evidence="18" type="ordered locus">At1g18370</name>
    <name evidence="19" type="ORF">F15H18.12</name>
</gene>
<protein>
    <recommendedName>
        <fullName evidence="17">Kinesin-like protein KIN-7A</fullName>
    </recommendedName>
    <alternativeName>
        <fullName evidence="14">NPK1-activating kinesin-1</fullName>
        <shortName evidence="20">AtNACK1</shortName>
    </alternativeName>
    <alternativeName>
        <fullName evidence="13">Protein HINKEL</fullName>
    </alternativeName>
</protein>
<name>KN7A_ARATH</name>
<feature type="chain" id="PRO_0000422316" description="Kinesin-like protein KIN-7A">
    <location>
        <begin position="1"/>
        <end position="974"/>
    </location>
</feature>
<feature type="domain" description="Kinesin motor" evidence="3">
    <location>
        <begin position="31"/>
        <end position="353"/>
    </location>
</feature>
<feature type="region of interest" description="Disordered" evidence="4">
    <location>
        <begin position="1"/>
        <end position="29"/>
    </location>
</feature>
<feature type="region of interest" description="Disordered" evidence="4">
    <location>
        <begin position="605"/>
        <end position="649"/>
    </location>
</feature>
<feature type="region of interest" description="Disordered" evidence="4">
    <location>
        <begin position="663"/>
        <end position="713"/>
    </location>
</feature>
<feature type="coiled-coil region" evidence="2">
    <location>
        <begin position="362"/>
        <end position="435"/>
    </location>
</feature>
<feature type="coiled-coil region" evidence="2">
    <location>
        <begin position="565"/>
        <end position="603"/>
    </location>
</feature>
<feature type="compositionally biased region" description="Basic residues" evidence="4">
    <location>
        <begin position="616"/>
        <end position="628"/>
    </location>
</feature>
<feature type="compositionally biased region" description="Polar residues" evidence="4">
    <location>
        <begin position="638"/>
        <end position="649"/>
    </location>
</feature>
<feature type="compositionally biased region" description="Polar residues" evidence="4">
    <location>
        <begin position="666"/>
        <end position="682"/>
    </location>
</feature>
<feature type="compositionally biased region" description="Basic and acidic residues" evidence="4">
    <location>
        <begin position="683"/>
        <end position="693"/>
    </location>
</feature>
<feature type="binding site" evidence="3">
    <location>
        <begin position="117"/>
        <end position="124"/>
    </location>
    <ligand>
        <name>ATP</name>
        <dbReference type="ChEBI" id="CHEBI:30616"/>
    </ligand>
</feature>
<feature type="mutagenesis site" description="Inhibition of the function in cytokinesis; when associated with A-687 and A-703." evidence="10">
    <original>T</original>
    <variation>A</variation>
    <location>
        <position position="145"/>
    </location>
</feature>
<feature type="mutagenesis site" description="Inhibition of the function in cytokinesis; when associated with D-687 and D-703." evidence="10">
    <original>T</original>
    <variation>D</variation>
    <location>
        <position position="145"/>
    </location>
</feature>
<feature type="mutagenesis site" description="Inhibition of the function in cytokinesis; when associated with A-145 and A-703." evidence="10">
    <original>T</original>
    <variation>A</variation>
    <location>
        <position position="687"/>
    </location>
</feature>
<feature type="mutagenesis site" description="Inhibition of the function in cytokinesis; when associated with D-145 and D-703." evidence="10">
    <original>T</original>
    <variation>D</variation>
    <location>
        <position position="687"/>
    </location>
</feature>
<feature type="mutagenesis site" description="Inhibition of the function in cytokinesis; when associated with A-145 and A-687." evidence="10">
    <original>T</original>
    <variation>A</variation>
    <location>
        <position position="703"/>
    </location>
</feature>
<feature type="mutagenesis site" description="Inhibition of the function in cytokinesis; when associated with D-145 and D-687." evidence="10">
    <original>T</original>
    <variation>D</variation>
    <location>
        <position position="703"/>
    </location>
</feature>
<keyword id="KW-0067">ATP-binding</keyword>
<keyword id="KW-0131">Cell cycle</keyword>
<keyword id="KW-0132">Cell division</keyword>
<keyword id="KW-0175">Coiled coil</keyword>
<keyword id="KW-0963">Cytoplasm</keyword>
<keyword id="KW-0206">Cytoskeleton</keyword>
<keyword id="KW-0493">Microtubule</keyword>
<keyword id="KW-0505">Motor protein</keyword>
<keyword id="KW-0547">Nucleotide-binding</keyword>
<keyword id="KW-0597">Phosphoprotein</keyword>
<keyword id="KW-1185">Reference proteome</keyword>
<comment type="function">
    <text evidence="5 6 7 8 9 10 16">Probable plus end-directed motor protein that functions in the NACK-PQR (ANP1-MKK6-MPK4) MAP kinase signaling pathway, which is essential for somatic cell cytokinesis, especially for the cell-plate formation and its expansion. Regulates the activity and the localization of ANP1, probably by association through the non-catalytic region of the kinase. Functionally redundant with NACK2 and essential to promote the progression of cytokinesis and for cellularization (formation of the cell plate) during microgametogenesis and megagametogenesis.</text>
</comment>
<comment type="subcellular location">
    <subcellularLocation>
        <location evidence="11 12">Cytoplasm</location>
        <location evidence="11 12">Cytoskeleton</location>
        <location evidence="11 12">Phragmoplast</location>
    </subcellularLocation>
</comment>
<comment type="tissue specificity">
    <text evidence="7">Expressed in roots, flowers, pollen mother cells and embryos.</text>
</comment>
<comment type="developmental stage">
    <text evidence="5">Expressed in a patchy pattern during embryogenesis.</text>
</comment>
<comment type="PTM">
    <text evidence="1">Phosphorylated at Thr-145, Thr-687 and Thr-703 by CDKAs and CDKBs. Phosphorylated NACK1 fails to mediate cytokinesis.</text>
</comment>
<comment type="disruption phenotype">
    <text evidence="5 6 7">Growth defects, dwarf plants with small, humped cotyledons and leaves. Development arrested at the vegetative stage without production of reproductive organs.</text>
</comment>
<comment type="similarity">
    <text evidence="15">Belongs to the TRAFAC class myosin-kinesin ATPase superfamily. Kinesin family. KIN-7 subfamily.</text>
</comment>
<comment type="sequence caution" evidence="17">
    <conflict type="erroneous gene model prediction">
        <sequence resource="EMBL-CDS" id="AAF25984"/>
    </conflict>
</comment>
<organism>
    <name type="scientific">Arabidopsis thaliana</name>
    <name type="common">Mouse-ear cress</name>
    <dbReference type="NCBI Taxonomy" id="3702"/>
    <lineage>
        <taxon>Eukaryota</taxon>
        <taxon>Viridiplantae</taxon>
        <taxon>Streptophyta</taxon>
        <taxon>Embryophyta</taxon>
        <taxon>Tracheophyta</taxon>
        <taxon>Spermatophyta</taxon>
        <taxon>Magnoliopsida</taxon>
        <taxon>eudicotyledons</taxon>
        <taxon>Gunneridae</taxon>
        <taxon>Pentapetalae</taxon>
        <taxon>rosids</taxon>
        <taxon>malvids</taxon>
        <taxon>Brassicales</taxon>
        <taxon>Brassicaceae</taxon>
        <taxon>Camelineae</taxon>
        <taxon>Arabidopsis</taxon>
    </lineage>
</organism>
<dbReference type="EMBL" id="AB081599">
    <property type="protein sequence ID" value="BAB88748.1"/>
    <property type="molecule type" value="mRNA"/>
</dbReference>
<dbReference type="EMBL" id="AC013354">
    <property type="protein sequence ID" value="AAF25984.1"/>
    <property type="status" value="ALT_SEQ"/>
    <property type="molecule type" value="Genomic_DNA"/>
</dbReference>
<dbReference type="EMBL" id="CP002684">
    <property type="protein sequence ID" value="AEE29708.1"/>
    <property type="molecule type" value="Genomic_DNA"/>
</dbReference>
<dbReference type="RefSeq" id="NP_173273.2">
    <property type="nucleotide sequence ID" value="NM_101695.5"/>
</dbReference>
<dbReference type="SMR" id="Q8S905"/>
<dbReference type="BioGRID" id="23657">
    <property type="interactions" value="2"/>
</dbReference>
<dbReference type="FunCoup" id="Q8S905">
    <property type="interactions" value="326"/>
</dbReference>
<dbReference type="STRING" id="3702.Q8S905"/>
<dbReference type="GlyGen" id="Q8S905">
    <property type="glycosylation" value="2 sites"/>
</dbReference>
<dbReference type="iPTMnet" id="Q8S905"/>
<dbReference type="PaxDb" id="3702-AT1G18370.1"/>
<dbReference type="ProteomicsDB" id="238228"/>
<dbReference type="EnsemblPlants" id="AT1G18370.1">
    <property type="protein sequence ID" value="AT1G18370.1"/>
    <property type="gene ID" value="AT1G18370"/>
</dbReference>
<dbReference type="GeneID" id="838418"/>
<dbReference type="Gramene" id="AT1G18370.1">
    <property type="protein sequence ID" value="AT1G18370.1"/>
    <property type="gene ID" value="AT1G18370"/>
</dbReference>
<dbReference type="KEGG" id="ath:AT1G18370"/>
<dbReference type="Araport" id="AT1G18370"/>
<dbReference type="TAIR" id="AT1G18370">
    <property type="gene designation" value="HIK"/>
</dbReference>
<dbReference type="eggNOG" id="KOG0242">
    <property type="taxonomic scope" value="Eukaryota"/>
</dbReference>
<dbReference type="HOGENOM" id="CLU_013407_0_0_1"/>
<dbReference type="InParanoid" id="Q8S905"/>
<dbReference type="OMA" id="QVAWDCV"/>
<dbReference type="PhylomeDB" id="Q8S905"/>
<dbReference type="PRO" id="PR:Q8S905"/>
<dbReference type="Proteomes" id="UP000006548">
    <property type="component" value="Chromosome 1"/>
</dbReference>
<dbReference type="ExpressionAtlas" id="Q8S905">
    <property type="expression patterns" value="baseline and differential"/>
</dbReference>
<dbReference type="GO" id="GO:0005874">
    <property type="term" value="C:microtubule"/>
    <property type="evidence" value="ECO:0007669"/>
    <property type="project" value="UniProtKB-KW"/>
</dbReference>
<dbReference type="GO" id="GO:0009524">
    <property type="term" value="C:phragmoplast"/>
    <property type="evidence" value="ECO:0000314"/>
    <property type="project" value="UniProtKB"/>
</dbReference>
<dbReference type="GO" id="GO:0005524">
    <property type="term" value="F:ATP binding"/>
    <property type="evidence" value="ECO:0007669"/>
    <property type="project" value="UniProtKB-KW"/>
</dbReference>
<dbReference type="GO" id="GO:0008017">
    <property type="term" value="F:microtubule binding"/>
    <property type="evidence" value="ECO:0007669"/>
    <property type="project" value="InterPro"/>
</dbReference>
<dbReference type="GO" id="GO:0003777">
    <property type="term" value="F:microtubule motor activity"/>
    <property type="evidence" value="ECO:0007669"/>
    <property type="project" value="InterPro"/>
</dbReference>
<dbReference type="GO" id="GO:0000911">
    <property type="term" value="P:cytokinesis by cell plate formation"/>
    <property type="evidence" value="ECO:0000316"/>
    <property type="project" value="TAIR"/>
</dbReference>
<dbReference type="GO" id="GO:0009558">
    <property type="term" value="P:embryo sac cellularization"/>
    <property type="evidence" value="ECO:0000316"/>
    <property type="project" value="TAIR"/>
</dbReference>
<dbReference type="GO" id="GO:0048229">
    <property type="term" value="P:gametophyte development"/>
    <property type="evidence" value="ECO:0000316"/>
    <property type="project" value="TAIR"/>
</dbReference>
<dbReference type="GO" id="GO:0007018">
    <property type="term" value="P:microtubule-based movement"/>
    <property type="evidence" value="ECO:0007669"/>
    <property type="project" value="InterPro"/>
</dbReference>
<dbReference type="GO" id="GO:0009555">
    <property type="term" value="P:pollen development"/>
    <property type="evidence" value="ECO:0000316"/>
    <property type="project" value="TAIR"/>
</dbReference>
<dbReference type="CDD" id="cd01374">
    <property type="entry name" value="KISc_CENP_E"/>
    <property type="match status" value="1"/>
</dbReference>
<dbReference type="FunFam" id="3.40.850.10:FF:000016">
    <property type="entry name" value="Kinesin-like protein"/>
    <property type="match status" value="1"/>
</dbReference>
<dbReference type="Gene3D" id="3.40.850.10">
    <property type="entry name" value="Kinesin motor domain"/>
    <property type="match status" value="1"/>
</dbReference>
<dbReference type="InterPro" id="IPR027640">
    <property type="entry name" value="Kinesin-like_fam"/>
</dbReference>
<dbReference type="InterPro" id="IPR019821">
    <property type="entry name" value="Kinesin_motor_CS"/>
</dbReference>
<dbReference type="InterPro" id="IPR001752">
    <property type="entry name" value="Kinesin_motor_dom"/>
</dbReference>
<dbReference type="InterPro" id="IPR036961">
    <property type="entry name" value="Kinesin_motor_dom_sf"/>
</dbReference>
<dbReference type="InterPro" id="IPR021881">
    <property type="entry name" value="NACK_C"/>
</dbReference>
<dbReference type="InterPro" id="IPR027417">
    <property type="entry name" value="P-loop_NTPase"/>
</dbReference>
<dbReference type="PANTHER" id="PTHR47968">
    <property type="entry name" value="CENTROMERE PROTEIN E"/>
    <property type="match status" value="1"/>
</dbReference>
<dbReference type="PANTHER" id="PTHR47968:SF23">
    <property type="entry name" value="KINESIN-LIKE PROTEIN KIN-7A"/>
    <property type="match status" value="1"/>
</dbReference>
<dbReference type="Pfam" id="PF11995">
    <property type="entry name" value="DUF3490"/>
    <property type="match status" value="1"/>
</dbReference>
<dbReference type="Pfam" id="PF00225">
    <property type="entry name" value="Kinesin"/>
    <property type="match status" value="1"/>
</dbReference>
<dbReference type="PRINTS" id="PR00380">
    <property type="entry name" value="KINESINHEAVY"/>
</dbReference>
<dbReference type="SMART" id="SM00129">
    <property type="entry name" value="KISc"/>
    <property type="match status" value="1"/>
</dbReference>
<dbReference type="SUPFAM" id="SSF52540">
    <property type="entry name" value="P-loop containing nucleoside triphosphate hydrolases"/>
    <property type="match status" value="1"/>
</dbReference>
<dbReference type="PROSITE" id="PS00411">
    <property type="entry name" value="KINESIN_MOTOR_1"/>
    <property type="match status" value="1"/>
</dbReference>
<dbReference type="PROSITE" id="PS50067">
    <property type="entry name" value="KINESIN_MOTOR_2"/>
    <property type="match status" value="1"/>
</dbReference>
<reference key="1">
    <citation type="journal article" date="2002" name="Cell">
        <title>Expansion of the cell plate in plant cytokinesis requires a kinesin-like protein/MAPKKK complex.</title>
        <authorList>
            <person name="Nishihama R."/>
            <person name="Soyano T."/>
            <person name="Ishikawa M."/>
            <person name="Araki S."/>
            <person name="Tanaka H."/>
            <person name="Asada T."/>
            <person name="Irie K."/>
            <person name="Ito M."/>
            <person name="Terada M."/>
            <person name="Banno H."/>
            <person name="Yamazaki Y."/>
            <person name="Machida Y."/>
        </authorList>
    </citation>
    <scope>NUCLEOTIDE SEQUENCE [MRNA]</scope>
    <scope>FUNCTION</scope>
    <scope>DISRUPTION PHENOTYPE</scope>
    <source>
        <strain>cv. Columbia</strain>
    </source>
</reference>
<reference key="2">
    <citation type="journal article" date="2000" name="Nature">
        <title>Sequence and analysis of chromosome 1 of the plant Arabidopsis thaliana.</title>
        <authorList>
            <person name="Theologis A."/>
            <person name="Ecker J.R."/>
            <person name="Palm C.J."/>
            <person name="Federspiel N.A."/>
            <person name="Kaul S."/>
            <person name="White O."/>
            <person name="Alonso J."/>
            <person name="Altafi H."/>
            <person name="Araujo R."/>
            <person name="Bowman C.L."/>
            <person name="Brooks S.Y."/>
            <person name="Buehler E."/>
            <person name="Chan A."/>
            <person name="Chao Q."/>
            <person name="Chen H."/>
            <person name="Cheuk R.F."/>
            <person name="Chin C.W."/>
            <person name="Chung M.K."/>
            <person name="Conn L."/>
            <person name="Conway A.B."/>
            <person name="Conway A.R."/>
            <person name="Creasy T.H."/>
            <person name="Dewar K."/>
            <person name="Dunn P."/>
            <person name="Etgu P."/>
            <person name="Feldblyum T.V."/>
            <person name="Feng J.-D."/>
            <person name="Fong B."/>
            <person name="Fujii C.Y."/>
            <person name="Gill J.E."/>
            <person name="Goldsmith A.D."/>
            <person name="Haas B."/>
            <person name="Hansen N.F."/>
            <person name="Hughes B."/>
            <person name="Huizar L."/>
            <person name="Hunter J.L."/>
            <person name="Jenkins J."/>
            <person name="Johnson-Hopson C."/>
            <person name="Khan S."/>
            <person name="Khaykin E."/>
            <person name="Kim C.J."/>
            <person name="Koo H.L."/>
            <person name="Kremenetskaia I."/>
            <person name="Kurtz D.B."/>
            <person name="Kwan A."/>
            <person name="Lam B."/>
            <person name="Langin-Hooper S."/>
            <person name="Lee A."/>
            <person name="Lee J.M."/>
            <person name="Lenz C.A."/>
            <person name="Li J.H."/>
            <person name="Li Y.-P."/>
            <person name="Lin X."/>
            <person name="Liu S.X."/>
            <person name="Liu Z.A."/>
            <person name="Luros J.S."/>
            <person name="Maiti R."/>
            <person name="Marziali A."/>
            <person name="Militscher J."/>
            <person name="Miranda M."/>
            <person name="Nguyen M."/>
            <person name="Nierman W.C."/>
            <person name="Osborne B.I."/>
            <person name="Pai G."/>
            <person name="Peterson J."/>
            <person name="Pham P.K."/>
            <person name="Rizzo M."/>
            <person name="Rooney T."/>
            <person name="Rowley D."/>
            <person name="Sakano H."/>
            <person name="Salzberg S.L."/>
            <person name="Schwartz J.R."/>
            <person name="Shinn P."/>
            <person name="Southwick A.M."/>
            <person name="Sun H."/>
            <person name="Tallon L.J."/>
            <person name="Tambunga G."/>
            <person name="Toriumi M.J."/>
            <person name="Town C.D."/>
            <person name="Utterback T."/>
            <person name="Van Aken S."/>
            <person name="Vaysberg M."/>
            <person name="Vysotskaia V.S."/>
            <person name="Walker M."/>
            <person name="Wu D."/>
            <person name="Yu G."/>
            <person name="Fraser C.M."/>
            <person name="Venter J.C."/>
            <person name="Davis R.W."/>
        </authorList>
    </citation>
    <scope>NUCLEOTIDE SEQUENCE [LARGE SCALE GENOMIC DNA]</scope>
    <source>
        <strain>cv. Columbia</strain>
    </source>
</reference>
<reference key="3">
    <citation type="journal article" date="2017" name="Plant J.">
        <title>Araport11: a complete reannotation of the Arabidopsis thaliana reference genome.</title>
        <authorList>
            <person name="Cheng C.Y."/>
            <person name="Krishnakumar V."/>
            <person name="Chan A.P."/>
            <person name="Thibaud-Nissen F."/>
            <person name="Schobel S."/>
            <person name="Town C.D."/>
        </authorList>
    </citation>
    <scope>GENOME REANNOTATION</scope>
    <source>
        <strain>cv. Columbia</strain>
    </source>
</reference>
<reference key="4">
    <citation type="journal article" date="2001" name="BMC Genomics">
        <title>Kinesins in the Arabidopsis genome: a comparative analysis among eukaryotes.</title>
        <authorList>
            <person name="Reddy A.S."/>
            <person name="Day I.S."/>
        </authorList>
    </citation>
    <scope>GENE FAMILY</scope>
</reference>
<reference key="5">
    <citation type="journal article" date="2002" name="Curr. Biol.">
        <title>The Arabidopsis HINKEL gene encodes a kinesin-related protein involved in cytokinesis and is expressed in a cell cycle-dependent manner.</title>
        <authorList>
            <person name="Strompen G."/>
            <person name="El Kasmi F."/>
            <person name="Richter S."/>
            <person name="Lukowitz W."/>
            <person name="Assaad F.F."/>
            <person name="Juergens G."/>
            <person name="Mayer U."/>
        </authorList>
    </citation>
    <scope>FUNCTION</scope>
    <scope>DEVELOPMENTAL STAGE</scope>
    <scope>DISRUPTION PHENOTYPE</scope>
</reference>
<reference key="6">
    <citation type="journal article" date="2004" name="Genes Cells">
        <title>The AtNACK1/HINKEL and STUD/TETRASPORE/AtNACK2 genes, which encode functionally redundant kinesins, are essential for cytokinesis in Arabidopsis.</title>
        <authorList>
            <person name="Tanaka H."/>
            <person name="Ishikawa M."/>
            <person name="Kitamura S."/>
            <person name="Takahashi Y."/>
            <person name="Soyano T."/>
            <person name="Machida C."/>
            <person name="Machida Y."/>
        </authorList>
    </citation>
    <scope>FUNCTION</scope>
    <scope>TISSUE SPECIFICITY</scope>
    <scope>DISRUPTION PHENOTYPE</scope>
</reference>
<reference key="7">
    <citation type="journal article" date="2006" name="BMC Genomics">
        <title>Comprehensive comparative analysis of kinesins in photosynthetic eukaryotes.</title>
        <authorList>
            <person name="Richardson D.N."/>
            <person name="Simmons M.P."/>
            <person name="Reddy A.S."/>
        </authorList>
    </citation>
    <scope>GENE FAMILY</scope>
    <scope>NOMENCLATURE</scope>
</reference>
<reference key="8">
    <citation type="journal article" date="2008" name="Mol. Plant">
        <title>Arabidopsis kinesins HINKEL and TETRASPORE act redundantly to control cell plate expansion during cytokinesis in the male gametophyte.</title>
        <authorList>
            <person name="Oh S.A."/>
            <person name="Bourdon V."/>
            <person name="Das 'Pal M."/>
            <person name="Dickinson H."/>
            <person name="Twell D."/>
        </authorList>
    </citation>
    <scope>FUNCTION</scope>
</reference>
<reference key="9">
    <citation type="journal article" date="2010" name="Plant Cell Physiol.">
        <title>HINKEL kinesin, ANP MAPKKKs and MKK6/ANQ MAPKK, which phosphorylates and activates MPK4 MAPK, constitute a pathway that is required for cytokinesis in Arabidopsis thaliana.</title>
        <authorList>
            <person name="Takahashi Y."/>
            <person name="Soyano T."/>
            <person name="Kosetsu K."/>
            <person name="Sasabe M."/>
            <person name="Machida Y."/>
        </authorList>
    </citation>
    <scope>FUNCTION</scope>
</reference>
<reference key="10">
    <citation type="journal article" date="2011" name="Proc. Natl. Acad. Sci. U.S.A.">
        <title>Phosphorylation of a mitotic kinesin-like protein and a MAPKKK by cyclin-dependent kinases (CDKs) is involved in the transition to cytokinesis in plants.</title>
        <authorList>
            <person name="Sasabe M."/>
            <person name="Boudolf V."/>
            <person name="De Veylder L."/>
            <person name="Inze D."/>
            <person name="Genschik P."/>
            <person name="Machida Y."/>
        </authorList>
    </citation>
    <scope>FUNCTION</scope>
    <scope>MUTAGENESIS OF THR-145; THR-687 AND THR-703</scope>
</reference>
<reference key="11">
    <citation type="journal article" date="2012" name="Protoplasma">
        <title>Functions of the Arabidopsis kinesin superfamily of microtubule-based motor proteins.</title>
        <authorList>
            <person name="Zhu C."/>
            <person name="Dixit R."/>
        </authorList>
    </citation>
    <scope>REVIEW</scope>
</reference>
<reference key="12">
    <citation type="journal article" date="2013" name="Plant J.">
        <title>The microtubule-associated kinase-like protein RUNKEL functions in somatic and syncytial cytokinesis.</title>
        <authorList>
            <person name="Krupnova T."/>
            <person name="Stierhof Y.-D."/>
            <person name="Hiller U."/>
            <person name="Strompen G."/>
            <person name="Mueller S."/>
        </authorList>
    </citation>
    <scope>SUBCELLULAR LOCATION</scope>
</reference>
<reference key="13">
    <citation type="journal article" date="2015" name="J. Plant Res.">
        <title>The carboxyl-terminal tail of the stalk of Arabidopsis NACK1/HINKEL kinesin is required for its localization to the cell plate formation site.</title>
        <authorList>
            <person name="Sasabe M."/>
            <person name="Ishibashi N."/>
            <person name="Haruta T."/>
            <person name="Minami A."/>
            <person name="Kurihara D."/>
            <person name="Higashiyama T."/>
            <person name="Nishihama R."/>
            <person name="Ito M."/>
            <person name="Machida Y."/>
        </authorList>
    </citation>
    <scope>SUBCELLULAR LOCATION</scope>
</reference>
<reference key="14">
    <citation type="journal article" date="2016" name="PLoS ONE">
        <title>A genetic screen for mutations affecting cell division in the Arabidopsis thaliana embryo identifies seven loci required for cytokinesis.</title>
        <authorList>
            <person name="Gillmor C.S."/>
            <person name="Roeder A.H."/>
            <person name="Sieber P."/>
            <person name="Somerville C."/>
            <person name="Lukowitz W."/>
        </authorList>
    </citation>
    <scope>FUNCTION</scope>
</reference>
<evidence type="ECO:0000250" key="1">
    <source>
        <dbReference type="UniProtKB" id="Q8S950"/>
    </source>
</evidence>
<evidence type="ECO:0000255" key="2"/>
<evidence type="ECO:0000255" key="3">
    <source>
        <dbReference type="PROSITE-ProRule" id="PRU00283"/>
    </source>
</evidence>
<evidence type="ECO:0000256" key="4">
    <source>
        <dbReference type="SAM" id="MobiDB-lite"/>
    </source>
</evidence>
<evidence type="ECO:0000269" key="5">
    <source>
    </source>
</evidence>
<evidence type="ECO:0000269" key="6">
    <source>
    </source>
</evidence>
<evidence type="ECO:0000269" key="7">
    <source>
    </source>
</evidence>
<evidence type="ECO:0000269" key="8">
    <source>
    </source>
</evidence>
<evidence type="ECO:0000269" key="9">
    <source>
    </source>
</evidence>
<evidence type="ECO:0000269" key="10">
    <source>
    </source>
</evidence>
<evidence type="ECO:0000269" key="11">
    <source>
    </source>
</evidence>
<evidence type="ECO:0000269" key="12">
    <source>
    </source>
</evidence>
<evidence type="ECO:0000303" key="13">
    <source>
    </source>
</evidence>
<evidence type="ECO:0000303" key="14">
    <source>
    </source>
</evidence>
<evidence type="ECO:0000303" key="15">
    <source>
    </source>
</evidence>
<evidence type="ECO:0000303" key="16">
    <source>
    </source>
</evidence>
<evidence type="ECO:0000305" key="17"/>
<evidence type="ECO:0000312" key="18">
    <source>
        <dbReference type="Araport" id="AT1G18370"/>
    </source>
</evidence>
<evidence type="ECO:0000312" key="19">
    <source>
        <dbReference type="EMBL" id="AAF25984.1"/>
    </source>
</evidence>
<evidence type="ECO:0000312" key="20">
    <source>
        <dbReference type="EMBL" id="BAB88748.1"/>
    </source>
</evidence>
<proteinExistence type="evidence at protein level"/>